<sequence>MTNHEQDQQDNSELLDDDQVTLESQQAADSGAEAPASDDVAALQAEIARLNEELQTTKENALRAAAEAQNARRRAEQDVEKAHKFGLEKFVGDILPVADNLERAIDAAKAEGADLGVVVEGVELTLKTLVDGLKRHKVEQIDPQGEPFDPQLHQAMTMIEQPDVEPNTVINVFQRGYTLHGRLVRPAMVVVSKA</sequence>
<organism>
    <name type="scientific">Saccharophagus degradans (strain 2-40 / ATCC 43961 / DSM 17024)</name>
    <dbReference type="NCBI Taxonomy" id="203122"/>
    <lineage>
        <taxon>Bacteria</taxon>
        <taxon>Pseudomonadati</taxon>
        <taxon>Pseudomonadota</taxon>
        <taxon>Gammaproteobacteria</taxon>
        <taxon>Cellvibrionales</taxon>
        <taxon>Cellvibrionaceae</taxon>
        <taxon>Saccharophagus</taxon>
    </lineage>
</organism>
<evidence type="ECO:0000255" key="1">
    <source>
        <dbReference type="HAMAP-Rule" id="MF_01151"/>
    </source>
</evidence>
<evidence type="ECO:0000256" key="2">
    <source>
        <dbReference type="SAM" id="MobiDB-lite"/>
    </source>
</evidence>
<name>GRPE_SACD2</name>
<feature type="chain" id="PRO_1000137608" description="Protein GrpE">
    <location>
        <begin position="1"/>
        <end position="194"/>
    </location>
</feature>
<feature type="region of interest" description="Disordered" evidence="2">
    <location>
        <begin position="1"/>
        <end position="39"/>
    </location>
</feature>
<feature type="compositionally biased region" description="Acidic residues" evidence="2">
    <location>
        <begin position="8"/>
        <end position="20"/>
    </location>
</feature>
<accession>Q21H35</accession>
<gene>
    <name evidence="1" type="primary">grpE</name>
    <name type="ordered locus">Sde_2734</name>
</gene>
<proteinExistence type="inferred from homology"/>
<comment type="function">
    <text evidence="1">Participates actively in the response to hyperosmotic and heat shock by preventing the aggregation of stress-denatured proteins, in association with DnaK and GrpE. It is the nucleotide exchange factor for DnaK and may function as a thermosensor. Unfolded proteins bind initially to DnaJ; upon interaction with the DnaJ-bound protein, DnaK hydrolyzes its bound ATP, resulting in the formation of a stable complex. GrpE releases ADP from DnaK; ATP binding to DnaK triggers the release of the substrate protein, thus completing the reaction cycle. Several rounds of ATP-dependent interactions between DnaJ, DnaK and GrpE are required for fully efficient folding.</text>
</comment>
<comment type="subunit">
    <text evidence="1">Homodimer.</text>
</comment>
<comment type="subcellular location">
    <subcellularLocation>
        <location evidence="1">Cytoplasm</location>
    </subcellularLocation>
</comment>
<comment type="similarity">
    <text evidence="1">Belongs to the GrpE family.</text>
</comment>
<keyword id="KW-0143">Chaperone</keyword>
<keyword id="KW-0963">Cytoplasm</keyword>
<keyword id="KW-1185">Reference proteome</keyword>
<keyword id="KW-0346">Stress response</keyword>
<reference key="1">
    <citation type="journal article" date="2008" name="PLoS Genet.">
        <title>Complete genome sequence of the complex carbohydrate-degrading marine bacterium, Saccharophagus degradans strain 2-40 T.</title>
        <authorList>
            <person name="Weiner R.M."/>
            <person name="Taylor L.E. II"/>
            <person name="Henrissat B."/>
            <person name="Hauser L."/>
            <person name="Land M."/>
            <person name="Coutinho P.M."/>
            <person name="Rancurel C."/>
            <person name="Saunders E.H."/>
            <person name="Longmire A.G."/>
            <person name="Zhang H."/>
            <person name="Bayer E.A."/>
            <person name="Gilbert H.J."/>
            <person name="Larimer F."/>
            <person name="Zhulin I.B."/>
            <person name="Ekborg N.A."/>
            <person name="Lamed R."/>
            <person name="Richardson P.M."/>
            <person name="Borovok I."/>
            <person name="Hutcheson S."/>
        </authorList>
    </citation>
    <scope>NUCLEOTIDE SEQUENCE [LARGE SCALE GENOMIC DNA]</scope>
    <source>
        <strain>2-40 / ATCC 43961 / DSM 17024</strain>
    </source>
</reference>
<dbReference type="EMBL" id="CP000282">
    <property type="protein sequence ID" value="ABD81994.1"/>
    <property type="molecule type" value="Genomic_DNA"/>
</dbReference>
<dbReference type="RefSeq" id="WP_011469211.1">
    <property type="nucleotide sequence ID" value="NC_007912.1"/>
</dbReference>
<dbReference type="SMR" id="Q21H35"/>
<dbReference type="STRING" id="203122.Sde_2734"/>
<dbReference type="GeneID" id="98614392"/>
<dbReference type="KEGG" id="sde:Sde_2734"/>
<dbReference type="eggNOG" id="COG0576">
    <property type="taxonomic scope" value="Bacteria"/>
</dbReference>
<dbReference type="HOGENOM" id="CLU_057217_6_0_6"/>
<dbReference type="OrthoDB" id="9789811at2"/>
<dbReference type="Proteomes" id="UP000001947">
    <property type="component" value="Chromosome"/>
</dbReference>
<dbReference type="GO" id="GO:0005829">
    <property type="term" value="C:cytosol"/>
    <property type="evidence" value="ECO:0007669"/>
    <property type="project" value="TreeGrafter"/>
</dbReference>
<dbReference type="GO" id="GO:0000774">
    <property type="term" value="F:adenyl-nucleotide exchange factor activity"/>
    <property type="evidence" value="ECO:0007669"/>
    <property type="project" value="InterPro"/>
</dbReference>
<dbReference type="GO" id="GO:0042803">
    <property type="term" value="F:protein homodimerization activity"/>
    <property type="evidence" value="ECO:0007669"/>
    <property type="project" value="InterPro"/>
</dbReference>
<dbReference type="GO" id="GO:0051087">
    <property type="term" value="F:protein-folding chaperone binding"/>
    <property type="evidence" value="ECO:0007669"/>
    <property type="project" value="InterPro"/>
</dbReference>
<dbReference type="GO" id="GO:0051082">
    <property type="term" value="F:unfolded protein binding"/>
    <property type="evidence" value="ECO:0007669"/>
    <property type="project" value="TreeGrafter"/>
</dbReference>
<dbReference type="GO" id="GO:0006457">
    <property type="term" value="P:protein folding"/>
    <property type="evidence" value="ECO:0007669"/>
    <property type="project" value="InterPro"/>
</dbReference>
<dbReference type="CDD" id="cd00446">
    <property type="entry name" value="GrpE"/>
    <property type="match status" value="1"/>
</dbReference>
<dbReference type="FunFam" id="2.30.22.10:FF:000001">
    <property type="entry name" value="Protein GrpE"/>
    <property type="match status" value="1"/>
</dbReference>
<dbReference type="Gene3D" id="3.90.20.20">
    <property type="match status" value="1"/>
</dbReference>
<dbReference type="Gene3D" id="2.30.22.10">
    <property type="entry name" value="Head domain of nucleotide exchange factor GrpE"/>
    <property type="match status" value="1"/>
</dbReference>
<dbReference type="HAMAP" id="MF_01151">
    <property type="entry name" value="GrpE"/>
    <property type="match status" value="1"/>
</dbReference>
<dbReference type="InterPro" id="IPR000740">
    <property type="entry name" value="GrpE"/>
</dbReference>
<dbReference type="InterPro" id="IPR013805">
    <property type="entry name" value="GrpE_coiled_coil"/>
</dbReference>
<dbReference type="InterPro" id="IPR009012">
    <property type="entry name" value="GrpE_head"/>
</dbReference>
<dbReference type="NCBIfam" id="NF010737">
    <property type="entry name" value="PRK14139.1"/>
    <property type="match status" value="1"/>
</dbReference>
<dbReference type="NCBIfam" id="NF010738">
    <property type="entry name" value="PRK14140.1"/>
    <property type="match status" value="1"/>
</dbReference>
<dbReference type="NCBIfam" id="NF010748">
    <property type="entry name" value="PRK14150.1"/>
    <property type="match status" value="1"/>
</dbReference>
<dbReference type="NCBIfam" id="NF010749">
    <property type="entry name" value="PRK14151.1"/>
    <property type="match status" value="1"/>
</dbReference>
<dbReference type="PANTHER" id="PTHR21237">
    <property type="entry name" value="GRPE PROTEIN"/>
    <property type="match status" value="1"/>
</dbReference>
<dbReference type="PANTHER" id="PTHR21237:SF23">
    <property type="entry name" value="GRPE PROTEIN HOMOLOG, MITOCHONDRIAL"/>
    <property type="match status" value="1"/>
</dbReference>
<dbReference type="Pfam" id="PF01025">
    <property type="entry name" value="GrpE"/>
    <property type="match status" value="1"/>
</dbReference>
<dbReference type="PRINTS" id="PR00773">
    <property type="entry name" value="GRPEPROTEIN"/>
</dbReference>
<dbReference type="SUPFAM" id="SSF58014">
    <property type="entry name" value="Coiled-coil domain of nucleotide exchange factor GrpE"/>
    <property type="match status" value="1"/>
</dbReference>
<dbReference type="SUPFAM" id="SSF51064">
    <property type="entry name" value="Head domain of nucleotide exchange factor GrpE"/>
    <property type="match status" value="1"/>
</dbReference>
<dbReference type="PROSITE" id="PS01071">
    <property type="entry name" value="GRPE"/>
    <property type="match status" value="1"/>
</dbReference>
<protein>
    <recommendedName>
        <fullName evidence="1">Protein GrpE</fullName>
    </recommendedName>
    <alternativeName>
        <fullName evidence="1">HSP-70 cofactor</fullName>
    </alternativeName>
</protein>